<keyword id="KW-0238">DNA-binding</keyword>
<keyword id="KW-0539">Nucleus</keyword>
<keyword id="KW-1185">Reference proteome</keyword>
<keyword id="KW-0804">Transcription</keyword>
<keyword id="KW-0805">Transcription regulation</keyword>
<gene>
    <name type="primary">OLIG2</name>
</gene>
<feature type="chain" id="PRO_0000127416" description="Oligodendrocyte transcription factor 2">
    <location>
        <begin position="1"/>
        <end position="298"/>
    </location>
</feature>
<feature type="domain" description="bHLH" evidence="2">
    <location>
        <begin position="106"/>
        <end position="160"/>
    </location>
</feature>
<feature type="region of interest" description="Disordered" evidence="3">
    <location>
        <begin position="1"/>
        <end position="60"/>
    </location>
</feature>
<feature type="region of interest" description="Disordered" evidence="3">
    <location>
        <begin position="79"/>
        <end position="102"/>
    </location>
</feature>
<feature type="compositionally biased region" description="Polar residues" evidence="3">
    <location>
        <begin position="1"/>
        <end position="13"/>
    </location>
</feature>
<feature type="compositionally biased region" description="Gly residues" evidence="3">
    <location>
        <begin position="26"/>
        <end position="41"/>
    </location>
</feature>
<feature type="compositionally biased region" description="Low complexity" evidence="3">
    <location>
        <begin position="79"/>
        <end position="91"/>
    </location>
</feature>
<reference key="1">
    <citation type="journal article" date="2001" name="Neuron">
        <title>The bHLH transcription factor Olig2 promotes oligodendrocyte differentiation in collaboration with Nkx2.2.</title>
        <authorList>
            <person name="Zhou Q."/>
            <person name="Choi G."/>
            <person name="Anderson D.J."/>
        </authorList>
    </citation>
    <scope>NUCLEOTIDE SEQUENCE [MRNA]</scope>
</reference>
<reference key="2">
    <citation type="journal article" date="2001" name="Neuron">
        <title>Coordinate regulation of motor neuron subtype identity and pan-neuronal properties by the bHLH repressor Olig2.</title>
        <authorList>
            <person name="Novitch B.G."/>
            <person name="Chen A.I."/>
            <person name="Jessell T.M."/>
        </authorList>
    </citation>
    <scope>NUCLEOTIDE SEQUENCE [MRNA] OF 99-161</scope>
</reference>
<organism>
    <name type="scientific">Gallus gallus</name>
    <name type="common">Chicken</name>
    <dbReference type="NCBI Taxonomy" id="9031"/>
    <lineage>
        <taxon>Eukaryota</taxon>
        <taxon>Metazoa</taxon>
        <taxon>Chordata</taxon>
        <taxon>Craniata</taxon>
        <taxon>Vertebrata</taxon>
        <taxon>Euteleostomi</taxon>
        <taxon>Archelosauria</taxon>
        <taxon>Archosauria</taxon>
        <taxon>Dinosauria</taxon>
        <taxon>Saurischia</taxon>
        <taxon>Theropoda</taxon>
        <taxon>Coelurosauria</taxon>
        <taxon>Aves</taxon>
        <taxon>Neognathae</taxon>
        <taxon>Galloanserae</taxon>
        <taxon>Galliformes</taxon>
        <taxon>Phasianidae</taxon>
        <taxon>Phasianinae</taxon>
        <taxon>Gallus</taxon>
    </lineage>
</organism>
<comment type="function">
    <text evidence="1">Required for oligodendrocyte and motor neuron specification in the spinal cord.</text>
</comment>
<comment type="subcellular location">
    <subcellularLocation>
        <location evidence="2">Nucleus</location>
    </subcellularLocation>
</comment>
<proteinExistence type="evidence at transcript level"/>
<protein>
    <recommendedName>
        <fullName>Oligodendrocyte transcription factor 2</fullName>
        <shortName>Oligo2</shortName>
    </recommendedName>
</protein>
<dbReference type="EMBL" id="AF411041">
    <property type="protein sequence ID" value="AAL11883.1"/>
    <property type="molecule type" value="mRNA"/>
</dbReference>
<dbReference type="EMBL" id="AF405699">
    <property type="protein sequence ID" value="AAL02428.1"/>
    <property type="molecule type" value="mRNA"/>
</dbReference>
<dbReference type="RefSeq" id="NP_001026697.1">
    <property type="nucleotide sequence ID" value="NM_001031526.1"/>
</dbReference>
<dbReference type="SMR" id="Q90XB3"/>
<dbReference type="FunCoup" id="Q90XB3">
    <property type="interactions" value="89"/>
</dbReference>
<dbReference type="STRING" id="9031.ENSGALP00000047462"/>
<dbReference type="PaxDb" id="9031-ENSGALP00000043426"/>
<dbReference type="Ensembl" id="ENSGALT00010024347.1">
    <property type="protein sequence ID" value="ENSGALP00010013844.1"/>
    <property type="gene ID" value="ENSGALG00010010227.1"/>
</dbReference>
<dbReference type="GeneID" id="428612"/>
<dbReference type="KEGG" id="gga:428612"/>
<dbReference type="CTD" id="10215"/>
<dbReference type="VEuPathDB" id="HostDB:geneid_428612"/>
<dbReference type="eggNOG" id="KOG3898">
    <property type="taxonomic scope" value="Eukaryota"/>
</dbReference>
<dbReference type="GeneTree" id="ENSGT00940000161651"/>
<dbReference type="HOGENOM" id="CLU_065376_1_0_1"/>
<dbReference type="InParanoid" id="Q90XB3"/>
<dbReference type="OMA" id="SFQHWGA"/>
<dbReference type="OrthoDB" id="10011855at2759"/>
<dbReference type="PhylomeDB" id="Q90XB3"/>
<dbReference type="PRO" id="PR:Q90XB3"/>
<dbReference type="Proteomes" id="UP000000539">
    <property type="component" value="Chromosome 1"/>
</dbReference>
<dbReference type="Bgee" id="ENSGALG00000031010">
    <property type="expression patterns" value="Expressed in cerebellum"/>
</dbReference>
<dbReference type="GO" id="GO:0005737">
    <property type="term" value="C:cytoplasm"/>
    <property type="evidence" value="ECO:0007669"/>
    <property type="project" value="Ensembl"/>
</dbReference>
<dbReference type="GO" id="GO:0005634">
    <property type="term" value="C:nucleus"/>
    <property type="evidence" value="ECO:0000314"/>
    <property type="project" value="AgBase"/>
</dbReference>
<dbReference type="GO" id="GO:0000981">
    <property type="term" value="F:DNA-binding transcription factor activity, RNA polymerase II-specific"/>
    <property type="evidence" value="ECO:0000318"/>
    <property type="project" value="GO_Central"/>
</dbReference>
<dbReference type="GO" id="GO:0070888">
    <property type="term" value="F:E-box binding"/>
    <property type="evidence" value="ECO:0000318"/>
    <property type="project" value="GO_Central"/>
</dbReference>
<dbReference type="GO" id="GO:0071837">
    <property type="term" value="F:HMG box domain binding"/>
    <property type="evidence" value="ECO:0007669"/>
    <property type="project" value="Ensembl"/>
</dbReference>
<dbReference type="GO" id="GO:0042802">
    <property type="term" value="F:identical protein binding"/>
    <property type="evidence" value="ECO:0007669"/>
    <property type="project" value="Ensembl"/>
</dbReference>
<dbReference type="GO" id="GO:0046983">
    <property type="term" value="F:protein dimerization activity"/>
    <property type="evidence" value="ECO:0007669"/>
    <property type="project" value="InterPro"/>
</dbReference>
<dbReference type="GO" id="GO:0061564">
    <property type="term" value="P:axon development"/>
    <property type="evidence" value="ECO:0000318"/>
    <property type="project" value="GO_Central"/>
</dbReference>
<dbReference type="GO" id="GO:0042552">
    <property type="term" value="P:myelination"/>
    <property type="evidence" value="ECO:0007669"/>
    <property type="project" value="Ensembl"/>
</dbReference>
<dbReference type="GO" id="GO:0045665">
    <property type="term" value="P:negative regulation of neuron differentiation"/>
    <property type="evidence" value="ECO:0007669"/>
    <property type="project" value="Ensembl"/>
</dbReference>
<dbReference type="GO" id="GO:0000122">
    <property type="term" value="P:negative regulation of transcription by RNA polymerase II"/>
    <property type="evidence" value="ECO:0007669"/>
    <property type="project" value="Ensembl"/>
</dbReference>
<dbReference type="GO" id="GO:0048663">
    <property type="term" value="P:neuron fate commitment"/>
    <property type="evidence" value="ECO:0007669"/>
    <property type="project" value="Ensembl"/>
</dbReference>
<dbReference type="GO" id="GO:0048714">
    <property type="term" value="P:positive regulation of oligodendrocyte differentiation"/>
    <property type="evidence" value="ECO:0007669"/>
    <property type="project" value="Ensembl"/>
</dbReference>
<dbReference type="GO" id="GO:0045944">
    <property type="term" value="P:positive regulation of transcription by RNA polymerase II"/>
    <property type="evidence" value="ECO:0000318"/>
    <property type="project" value="GO_Central"/>
</dbReference>
<dbReference type="GO" id="GO:0007423">
    <property type="term" value="P:sensory organ development"/>
    <property type="evidence" value="ECO:0000318"/>
    <property type="project" value="GO_Central"/>
</dbReference>
<dbReference type="GO" id="GO:0021522">
    <property type="term" value="P:spinal cord motor neuron differentiation"/>
    <property type="evidence" value="ECO:0007669"/>
    <property type="project" value="Ensembl"/>
</dbReference>
<dbReference type="GO" id="GO:0021530">
    <property type="term" value="P:spinal cord oligodendrocyte cell fate specification"/>
    <property type="evidence" value="ECO:0007669"/>
    <property type="project" value="Ensembl"/>
</dbReference>
<dbReference type="GO" id="GO:0021794">
    <property type="term" value="P:thalamus development"/>
    <property type="evidence" value="ECO:0007669"/>
    <property type="project" value="Ensembl"/>
</dbReference>
<dbReference type="CDD" id="cd18940">
    <property type="entry name" value="bHLH_TS_OLIG2"/>
    <property type="match status" value="1"/>
</dbReference>
<dbReference type="FunFam" id="4.10.280.10:FF:000031">
    <property type="entry name" value="Oligodendrocyte transcription factor 3"/>
    <property type="match status" value="1"/>
</dbReference>
<dbReference type="Gene3D" id="4.10.280.10">
    <property type="entry name" value="Helix-loop-helix DNA-binding domain"/>
    <property type="match status" value="1"/>
</dbReference>
<dbReference type="InterPro" id="IPR011598">
    <property type="entry name" value="bHLH_dom"/>
</dbReference>
<dbReference type="InterPro" id="IPR050359">
    <property type="entry name" value="bHLH_transcription_factors"/>
</dbReference>
<dbReference type="InterPro" id="IPR036638">
    <property type="entry name" value="HLH_DNA-bd_sf"/>
</dbReference>
<dbReference type="InterPro" id="IPR032658">
    <property type="entry name" value="Olig2_bHLH"/>
</dbReference>
<dbReference type="PANTHER" id="PTHR19290">
    <property type="entry name" value="BASIC HELIX-LOOP-HELIX PROTEIN NEUROGENIN-RELATED"/>
    <property type="match status" value="1"/>
</dbReference>
<dbReference type="PANTHER" id="PTHR19290:SF32">
    <property type="entry name" value="OLIGODENDROCYTE TRANSCRIPTION FACTOR 2"/>
    <property type="match status" value="1"/>
</dbReference>
<dbReference type="Pfam" id="PF00010">
    <property type="entry name" value="HLH"/>
    <property type="match status" value="1"/>
</dbReference>
<dbReference type="SMART" id="SM00353">
    <property type="entry name" value="HLH"/>
    <property type="match status" value="1"/>
</dbReference>
<dbReference type="SUPFAM" id="SSF47459">
    <property type="entry name" value="HLH, helix-loop-helix DNA-binding domain"/>
    <property type="match status" value="1"/>
</dbReference>
<dbReference type="PROSITE" id="PS50888">
    <property type="entry name" value="BHLH"/>
    <property type="match status" value="1"/>
</dbReference>
<accession>Q90XB3</accession>
<accession>Q90XC8</accession>
<name>OLIG2_CHICK</name>
<evidence type="ECO:0000250" key="1"/>
<evidence type="ECO:0000255" key="2">
    <source>
        <dbReference type="PROSITE-ProRule" id="PRU00981"/>
    </source>
</evidence>
<evidence type="ECO:0000256" key="3">
    <source>
        <dbReference type="SAM" id="MobiDB-lite"/>
    </source>
</evidence>
<sequence length="298" mass="30319">MDSDASLVSSRPSSPEPDELFLAGRNKGGGGGGGGGGGFTGGTVSSSTQSDSPPELSAELRSAMSAAGVVVVDKLGFKSSSSSASSASSASSKKDKKQMTEPELQQLRLKINSRERKRMHDLNIAMDGLREVMPYAHGPSVRKLSKIATLLLARNYILMLTNSLEEMKRLVSEIYGGHHAAFHPAACPAGMGAHSAPLPAHPGHPASHPAHHPILPPAAVSSASLPGSGLSAVGSIRPPHGLLKSPSAAAAAPGLGGGFQHWGGMPCPCSMCQVAAPPHHHVSAMGGAALPRLASDAK</sequence>